<dbReference type="EMBL" id="AE003849">
    <property type="protein sequence ID" value="AAF84294.1"/>
    <property type="molecule type" value="Genomic_DNA"/>
</dbReference>
<dbReference type="PIR" id="A82675">
    <property type="entry name" value="A82675"/>
</dbReference>
<dbReference type="RefSeq" id="WP_010893986.1">
    <property type="nucleotide sequence ID" value="NC_002488.3"/>
</dbReference>
<dbReference type="SMR" id="Q9PD94"/>
<dbReference type="STRING" id="160492.XF_1485"/>
<dbReference type="KEGG" id="xfa:XF_1485"/>
<dbReference type="eggNOG" id="COG1220">
    <property type="taxonomic scope" value="Bacteria"/>
</dbReference>
<dbReference type="HOGENOM" id="CLU_033123_0_0_6"/>
<dbReference type="Proteomes" id="UP000000812">
    <property type="component" value="Chromosome"/>
</dbReference>
<dbReference type="GO" id="GO:0009376">
    <property type="term" value="C:HslUV protease complex"/>
    <property type="evidence" value="ECO:0007669"/>
    <property type="project" value="UniProtKB-UniRule"/>
</dbReference>
<dbReference type="GO" id="GO:0005524">
    <property type="term" value="F:ATP binding"/>
    <property type="evidence" value="ECO:0007669"/>
    <property type="project" value="UniProtKB-UniRule"/>
</dbReference>
<dbReference type="GO" id="GO:0016887">
    <property type="term" value="F:ATP hydrolysis activity"/>
    <property type="evidence" value="ECO:0007669"/>
    <property type="project" value="InterPro"/>
</dbReference>
<dbReference type="GO" id="GO:0008233">
    <property type="term" value="F:peptidase activity"/>
    <property type="evidence" value="ECO:0007669"/>
    <property type="project" value="InterPro"/>
</dbReference>
<dbReference type="GO" id="GO:0036402">
    <property type="term" value="F:proteasome-activating activity"/>
    <property type="evidence" value="ECO:0007669"/>
    <property type="project" value="UniProtKB-UniRule"/>
</dbReference>
<dbReference type="GO" id="GO:0043335">
    <property type="term" value="P:protein unfolding"/>
    <property type="evidence" value="ECO:0007669"/>
    <property type="project" value="UniProtKB-UniRule"/>
</dbReference>
<dbReference type="GO" id="GO:0051603">
    <property type="term" value="P:proteolysis involved in protein catabolic process"/>
    <property type="evidence" value="ECO:0007669"/>
    <property type="project" value="TreeGrafter"/>
</dbReference>
<dbReference type="CDD" id="cd19498">
    <property type="entry name" value="RecA-like_HslU"/>
    <property type="match status" value="1"/>
</dbReference>
<dbReference type="FunFam" id="3.40.50.300:FF:000213">
    <property type="entry name" value="ATP-dependent protease ATPase subunit HslU"/>
    <property type="match status" value="1"/>
</dbReference>
<dbReference type="FunFam" id="3.40.50.300:FF:000220">
    <property type="entry name" value="ATP-dependent protease ATPase subunit HslU"/>
    <property type="match status" value="1"/>
</dbReference>
<dbReference type="Gene3D" id="1.10.8.60">
    <property type="match status" value="1"/>
</dbReference>
<dbReference type="Gene3D" id="1.10.8.10">
    <property type="entry name" value="DNA helicase RuvA subunit, C-terminal domain"/>
    <property type="match status" value="1"/>
</dbReference>
<dbReference type="Gene3D" id="3.40.50.300">
    <property type="entry name" value="P-loop containing nucleotide triphosphate hydrolases"/>
    <property type="match status" value="2"/>
</dbReference>
<dbReference type="HAMAP" id="MF_00249">
    <property type="entry name" value="HslU"/>
    <property type="match status" value="1"/>
</dbReference>
<dbReference type="InterPro" id="IPR003593">
    <property type="entry name" value="AAA+_ATPase"/>
</dbReference>
<dbReference type="InterPro" id="IPR050052">
    <property type="entry name" value="ATP-dep_Clp_protease_ClpX"/>
</dbReference>
<dbReference type="InterPro" id="IPR003959">
    <property type="entry name" value="ATPase_AAA_core"/>
</dbReference>
<dbReference type="InterPro" id="IPR019489">
    <property type="entry name" value="Clp_ATPase_C"/>
</dbReference>
<dbReference type="InterPro" id="IPR004491">
    <property type="entry name" value="HslU"/>
</dbReference>
<dbReference type="InterPro" id="IPR027417">
    <property type="entry name" value="P-loop_NTPase"/>
</dbReference>
<dbReference type="NCBIfam" id="TIGR00390">
    <property type="entry name" value="hslU"/>
    <property type="match status" value="1"/>
</dbReference>
<dbReference type="NCBIfam" id="NF003544">
    <property type="entry name" value="PRK05201.1"/>
    <property type="match status" value="1"/>
</dbReference>
<dbReference type="PANTHER" id="PTHR48102">
    <property type="entry name" value="ATP-DEPENDENT CLP PROTEASE ATP-BINDING SUBUNIT CLPX-LIKE, MITOCHONDRIAL-RELATED"/>
    <property type="match status" value="1"/>
</dbReference>
<dbReference type="PANTHER" id="PTHR48102:SF3">
    <property type="entry name" value="ATP-DEPENDENT PROTEASE ATPASE SUBUNIT HSLU"/>
    <property type="match status" value="1"/>
</dbReference>
<dbReference type="Pfam" id="PF00004">
    <property type="entry name" value="AAA"/>
    <property type="match status" value="1"/>
</dbReference>
<dbReference type="Pfam" id="PF07724">
    <property type="entry name" value="AAA_2"/>
    <property type="match status" value="1"/>
</dbReference>
<dbReference type="Pfam" id="PF10431">
    <property type="entry name" value="ClpB_D2-small"/>
    <property type="match status" value="1"/>
</dbReference>
<dbReference type="SMART" id="SM00382">
    <property type="entry name" value="AAA"/>
    <property type="match status" value="1"/>
</dbReference>
<dbReference type="SMART" id="SM01086">
    <property type="entry name" value="ClpB_D2-small"/>
    <property type="match status" value="1"/>
</dbReference>
<dbReference type="SUPFAM" id="SSF52540">
    <property type="entry name" value="P-loop containing nucleoside triphosphate hydrolases"/>
    <property type="match status" value="1"/>
</dbReference>
<accession>Q9PD94</accession>
<keyword id="KW-0067">ATP-binding</keyword>
<keyword id="KW-0143">Chaperone</keyword>
<keyword id="KW-0963">Cytoplasm</keyword>
<keyword id="KW-0547">Nucleotide-binding</keyword>
<feature type="chain" id="PRO_0000160565" description="ATP-dependent protease ATPase subunit HslU">
    <location>
        <begin position="1"/>
        <end position="459"/>
    </location>
</feature>
<feature type="binding site" evidence="1">
    <location>
        <position position="26"/>
    </location>
    <ligand>
        <name>ATP</name>
        <dbReference type="ChEBI" id="CHEBI:30616"/>
    </ligand>
</feature>
<feature type="binding site" evidence="1">
    <location>
        <begin position="68"/>
        <end position="73"/>
    </location>
    <ligand>
        <name>ATP</name>
        <dbReference type="ChEBI" id="CHEBI:30616"/>
    </ligand>
</feature>
<feature type="binding site" evidence="1">
    <location>
        <position position="271"/>
    </location>
    <ligand>
        <name>ATP</name>
        <dbReference type="ChEBI" id="CHEBI:30616"/>
    </ligand>
</feature>
<feature type="binding site" evidence="1">
    <location>
        <position position="337"/>
    </location>
    <ligand>
        <name>ATP</name>
        <dbReference type="ChEBI" id="CHEBI:30616"/>
    </ligand>
</feature>
<feature type="binding site" evidence="1">
    <location>
        <position position="409"/>
    </location>
    <ligand>
        <name>ATP</name>
        <dbReference type="ChEBI" id="CHEBI:30616"/>
    </ligand>
</feature>
<sequence length="459" mass="51633">MPSKTDFTSSTMTPREIVQELDRHIVGQQAAKRSVAIALRNRWRRMQLPEELRNEVMPKNILMIGPTGVGKTEIARRLATLANAPFVKVEATRFTEVGYVGKDVEQIGRDLVDTAVKMYREQAKVRVRTQAEEYAEERILDVLLPRRSVGIGFDVDADVIRQEPSAHESETRAKFRRMLRSGELEEREIELDVAVNVSMDIMTPPGMEEMGQQLRQMFSNIGGGKSQKRKLTIKAARPLLIEEEAAKLVNEDEIRAAAIEACEQNGIVFIDEIDKVVKRGDTVGGGDVSREGVQRDLLPLVEGSNVSTKYGTIRTNHILFIASGAFHLTKPSDLIPELQGRFPIRVELDALSKADFIRILTEPKAALTKQYQELLKTEGVSLDFTEDAIDRIAEIAYLVNERQENIGARRLHTVLERLLEMLSYESPDRDGESVTVDADYVNAHLGELVKDPDLSRYIL</sequence>
<comment type="function">
    <text evidence="1">ATPase subunit of a proteasome-like degradation complex; this subunit has chaperone activity. The binding of ATP and its subsequent hydrolysis by HslU are essential for unfolding of protein substrates subsequently hydrolyzed by HslV. HslU recognizes the N-terminal part of its protein substrates and unfolds these before they are guided to HslV for hydrolysis.</text>
</comment>
<comment type="subunit">
    <text evidence="1">A double ring-shaped homohexamer of HslV is capped on each side by a ring-shaped HslU homohexamer. The assembly of the HslU/HslV complex is dependent on binding of ATP.</text>
</comment>
<comment type="subcellular location">
    <subcellularLocation>
        <location evidence="1">Cytoplasm</location>
    </subcellularLocation>
</comment>
<comment type="similarity">
    <text evidence="1">Belongs to the ClpX chaperone family. HslU subfamily.</text>
</comment>
<protein>
    <recommendedName>
        <fullName evidence="1">ATP-dependent protease ATPase subunit HslU</fullName>
    </recommendedName>
    <alternativeName>
        <fullName evidence="1">Unfoldase HslU</fullName>
    </alternativeName>
</protein>
<proteinExistence type="inferred from homology"/>
<name>HSLU_XYLFA</name>
<reference key="1">
    <citation type="journal article" date="2000" name="Nature">
        <title>The genome sequence of the plant pathogen Xylella fastidiosa.</title>
        <authorList>
            <person name="Simpson A.J.G."/>
            <person name="Reinach F.C."/>
            <person name="Arruda P."/>
            <person name="Abreu F.A."/>
            <person name="Acencio M."/>
            <person name="Alvarenga R."/>
            <person name="Alves L.M.C."/>
            <person name="Araya J.E."/>
            <person name="Baia G.S."/>
            <person name="Baptista C.S."/>
            <person name="Barros M.H."/>
            <person name="Bonaccorsi E.D."/>
            <person name="Bordin S."/>
            <person name="Bove J.M."/>
            <person name="Briones M.R.S."/>
            <person name="Bueno M.R.P."/>
            <person name="Camargo A.A."/>
            <person name="Camargo L.E.A."/>
            <person name="Carraro D.M."/>
            <person name="Carrer H."/>
            <person name="Colauto N.B."/>
            <person name="Colombo C."/>
            <person name="Costa F.F."/>
            <person name="Costa M.C.R."/>
            <person name="Costa-Neto C.M."/>
            <person name="Coutinho L.L."/>
            <person name="Cristofani M."/>
            <person name="Dias-Neto E."/>
            <person name="Docena C."/>
            <person name="El-Dorry H."/>
            <person name="Facincani A.P."/>
            <person name="Ferreira A.J.S."/>
            <person name="Ferreira V.C.A."/>
            <person name="Ferro J.A."/>
            <person name="Fraga J.S."/>
            <person name="Franca S.C."/>
            <person name="Franco M.C."/>
            <person name="Frohme M."/>
            <person name="Furlan L.R."/>
            <person name="Garnier M."/>
            <person name="Goldman G.H."/>
            <person name="Goldman M.H.S."/>
            <person name="Gomes S.L."/>
            <person name="Gruber A."/>
            <person name="Ho P.L."/>
            <person name="Hoheisel J.D."/>
            <person name="Junqueira M.L."/>
            <person name="Kemper E.L."/>
            <person name="Kitajima J.P."/>
            <person name="Krieger J.E."/>
            <person name="Kuramae E.E."/>
            <person name="Laigret F."/>
            <person name="Lambais M.R."/>
            <person name="Leite L.C.C."/>
            <person name="Lemos E.G.M."/>
            <person name="Lemos M.V.F."/>
            <person name="Lopes S.A."/>
            <person name="Lopes C.R."/>
            <person name="Machado J.A."/>
            <person name="Machado M.A."/>
            <person name="Madeira A.M.B.N."/>
            <person name="Madeira H.M.F."/>
            <person name="Marino C.L."/>
            <person name="Marques M.V."/>
            <person name="Martins E.A.L."/>
            <person name="Martins E.M.F."/>
            <person name="Matsukuma A.Y."/>
            <person name="Menck C.F.M."/>
            <person name="Miracca E.C."/>
            <person name="Miyaki C.Y."/>
            <person name="Monteiro-Vitorello C.B."/>
            <person name="Moon D.H."/>
            <person name="Nagai M.A."/>
            <person name="Nascimento A.L.T.O."/>
            <person name="Netto L.E.S."/>
            <person name="Nhani A. Jr."/>
            <person name="Nobrega F.G."/>
            <person name="Nunes L.R."/>
            <person name="Oliveira M.A."/>
            <person name="de Oliveira M.C."/>
            <person name="de Oliveira R.C."/>
            <person name="Palmieri D.A."/>
            <person name="Paris A."/>
            <person name="Peixoto B.R."/>
            <person name="Pereira G.A.G."/>
            <person name="Pereira H.A. Jr."/>
            <person name="Pesquero J.B."/>
            <person name="Quaggio R.B."/>
            <person name="Roberto P.G."/>
            <person name="Rodrigues V."/>
            <person name="de Rosa A.J.M."/>
            <person name="de Rosa V.E. Jr."/>
            <person name="de Sa R.G."/>
            <person name="Santelli R.V."/>
            <person name="Sawasaki H.E."/>
            <person name="da Silva A.C.R."/>
            <person name="da Silva A.M."/>
            <person name="da Silva F.R."/>
            <person name="Silva W.A. Jr."/>
            <person name="da Silveira J.F."/>
            <person name="Silvestri M.L.Z."/>
            <person name="Siqueira W.J."/>
            <person name="de Souza A.A."/>
            <person name="de Souza A.P."/>
            <person name="Terenzi M.F."/>
            <person name="Truffi D."/>
            <person name="Tsai S.M."/>
            <person name="Tsuhako M.H."/>
            <person name="Vallada H."/>
            <person name="Van Sluys M.A."/>
            <person name="Verjovski-Almeida S."/>
            <person name="Vettore A.L."/>
            <person name="Zago M.A."/>
            <person name="Zatz M."/>
            <person name="Meidanis J."/>
            <person name="Setubal J.C."/>
        </authorList>
    </citation>
    <scope>NUCLEOTIDE SEQUENCE [LARGE SCALE GENOMIC DNA]</scope>
    <source>
        <strain>9a5c</strain>
    </source>
</reference>
<evidence type="ECO:0000255" key="1">
    <source>
        <dbReference type="HAMAP-Rule" id="MF_00249"/>
    </source>
</evidence>
<organism>
    <name type="scientific">Xylella fastidiosa (strain 9a5c)</name>
    <dbReference type="NCBI Taxonomy" id="160492"/>
    <lineage>
        <taxon>Bacteria</taxon>
        <taxon>Pseudomonadati</taxon>
        <taxon>Pseudomonadota</taxon>
        <taxon>Gammaproteobacteria</taxon>
        <taxon>Lysobacterales</taxon>
        <taxon>Lysobacteraceae</taxon>
        <taxon>Xylella</taxon>
    </lineage>
</organism>
<gene>
    <name evidence="1" type="primary">hslU</name>
    <name type="ordered locus">XF_1485</name>
</gene>